<geneLocation type="chloroplast"/>
<reference key="1">
    <citation type="journal article" date="2000" name="Nature">
        <title>Ancestral chloroplast genome in Mesostigma viride reveals an early branch of green plant evolution.</title>
        <authorList>
            <person name="Lemieux C."/>
            <person name="Otis C."/>
            <person name="Turmel M."/>
        </authorList>
    </citation>
    <scope>NUCLEOTIDE SEQUENCE [LARGE SCALE GENOMIC DNA]</scope>
    <source>
        <strain>NIES-296 / KY-14 / CCMP 2046</strain>
    </source>
</reference>
<gene>
    <name evidence="1" type="primary">rpoB</name>
</gene>
<protein>
    <recommendedName>
        <fullName evidence="1">DNA-directed RNA polymerase subunit beta</fullName>
        <ecNumber evidence="1">2.7.7.6</ecNumber>
    </recommendedName>
    <alternativeName>
        <fullName evidence="1">PEP</fullName>
    </alternativeName>
    <alternativeName>
        <fullName evidence="1">Plastid-encoded RNA polymerase subunit beta</fullName>
        <shortName evidence="1">RNA polymerase subunit beta</shortName>
    </alternativeName>
</protein>
<keyword id="KW-0150">Chloroplast</keyword>
<keyword id="KW-0240">DNA-directed RNA polymerase</keyword>
<keyword id="KW-0548">Nucleotidyltransferase</keyword>
<keyword id="KW-0934">Plastid</keyword>
<keyword id="KW-0804">Transcription</keyword>
<keyword id="KW-0808">Transferase</keyword>
<comment type="function">
    <text evidence="1">DNA-dependent RNA polymerase catalyzes the transcription of DNA into RNA using the four ribonucleoside triphosphates as substrates.</text>
</comment>
<comment type="catalytic activity">
    <reaction evidence="1">
        <text>RNA(n) + a ribonucleoside 5'-triphosphate = RNA(n+1) + diphosphate</text>
        <dbReference type="Rhea" id="RHEA:21248"/>
        <dbReference type="Rhea" id="RHEA-COMP:14527"/>
        <dbReference type="Rhea" id="RHEA-COMP:17342"/>
        <dbReference type="ChEBI" id="CHEBI:33019"/>
        <dbReference type="ChEBI" id="CHEBI:61557"/>
        <dbReference type="ChEBI" id="CHEBI:140395"/>
        <dbReference type="EC" id="2.7.7.6"/>
    </reaction>
</comment>
<comment type="subunit">
    <text evidence="1">In plastids the minimal PEP RNA polymerase catalytic core is composed of four subunits: alpha, beta, beta', and beta''. When a (nuclear-encoded) sigma factor is associated with the core the holoenzyme is formed, which can initiate transcription.</text>
</comment>
<comment type="subcellular location">
    <subcellularLocation>
        <location>Plastid</location>
        <location>Chloroplast</location>
    </subcellularLocation>
</comment>
<comment type="similarity">
    <text evidence="1">Belongs to the RNA polymerase beta chain family.</text>
</comment>
<organism>
    <name type="scientific">Mesostigma viride</name>
    <name type="common">Green alga</name>
    <dbReference type="NCBI Taxonomy" id="41882"/>
    <lineage>
        <taxon>Eukaryota</taxon>
        <taxon>Viridiplantae</taxon>
        <taxon>Streptophyta</taxon>
        <taxon>Mesostigmatophyceae</taxon>
        <taxon>Mesostigmatales</taxon>
        <taxon>Mesostigmataceae</taxon>
        <taxon>Mesostigma</taxon>
    </lineage>
</organism>
<accession>Q9MUS5</accession>
<feature type="chain" id="PRO_0000048031" description="DNA-directed RNA polymerase subunit beta">
    <location>
        <begin position="1"/>
        <end position="1080"/>
    </location>
</feature>
<evidence type="ECO:0000255" key="1">
    <source>
        <dbReference type="HAMAP-Rule" id="MF_01321"/>
    </source>
</evidence>
<name>RPOB_MESVI</name>
<sequence length="1080" mass="121911">MMIIEEYTPVPNTAFDFKIPDLIEMQLSSFRIFLKKGLIEELKDFSVISNSKKNLELRFFPEKYKLKRPKYNERTSIRRASTYTCQLYVPAKLTNKRTGEIQEQDVFLGEIPLMTGRGSFIINGSSRVIVNQIVRSPGIYYKREIDKKGRKTHSATIISNRGAWLRIETDKNGLIWARIGKIRKVSIMIVFKAMGLTKNEIFDALKYPQFLKKTIQETDPYLENDIQHDDDFENESTSTLLSTREILESRFFQSKYYDLGKVGRYKINKKLQLNIPENIRVLTVQDILAAVDYLINLEFNIGTLDDIDHLKNRRVRSVGELIQNQVRVGLGRLERMIYKRMGESSPDSLTLTSLVNPKPLVGAIREFFGSSQLSQFMDQTNPLSEITHKRRLSCLGPGGLSRERAGLAVRDIHPSHYGRICPIETPEGPNAGLIGSLATHSRVNEYGFLESPFYITKNRKVIKSELPIYLAPDQEDQFKVAPGDLLLSCYSSIENNYVPVRYKQEFTTSKAEEVDYVGISPTQAISIATSLIPFLEHDDANRALMGSNMQRQAVPLLKPNRPIVGTGFEEQVALDSGTVVICRHKGIVISVDSKTILVRSLRMNAKGIQHSHIDRYYLQKYNRSNQDTCINQKPVVSQGEWVQKGDILADGSATVNGELTLGQNILVAYMPWEGYNFEDAILISEKLVYEDIYTSIHIEKYEVDARKTKLGPEKITREIPNVNDHLLRNLDDNGIVIPGARVESGDILVGKVTPKEDLDQHPEGKLLRAIFGEKARDVRDSSLRVPNGVSGTVVNVRRLTGKELPSGVIMMVHVSISQKRKIQVGDKMAGRHGNKGIISKILPRQDMPYLQDGTPVDMVLNPLGVPSRMNVGQVFECLLGLAGEYLSENYKLMPFDEMYGKETSRGLVYSKLYEARQKTGYPWLFNIQSPGKSKLFDGRTGESFDQPVTIGKAYMLKLVHLVDDKIHARSTGPYSLVTQQPLGGRAKHGGQRLGEMEVWALEGFGAAYTLQELLTIKSDDMKGRNDALNAIIKGRPIPKPGTPESFKVLIRELQSLCLDIGVYKVHKSNKNQEIDLMQNF</sequence>
<proteinExistence type="inferred from homology"/>
<dbReference type="EC" id="2.7.7.6" evidence="1"/>
<dbReference type="EMBL" id="AF166114">
    <property type="protein sequence ID" value="AAF43826.1"/>
    <property type="molecule type" value="Genomic_DNA"/>
</dbReference>
<dbReference type="RefSeq" id="NP_038385.1">
    <property type="nucleotide sequence ID" value="NC_002186.1"/>
</dbReference>
<dbReference type="SMR" id="Q9MUS5"/>
<dbReference type="GeneID" id="800856"/>
<dbReference type="GO" id="GO:0009507">
    <property type="term" value="C:chloroplast"/>
    <property type="evidence" value="ECO:0007669"/>
    <property type="project" value="UniProtKB-SubCell"/>
</dbReference>
<dbReference type="GO" id="GO:0000428">
    <property type="term" value="C:DNA-directed RNA polymerase complex"/>
    <property type="evidence" value="ECO:0007669"/>
    <property type="project" value="UniProtKB-KW"/>
</dbReference>
<dbReference type="GO" id="GO:0005739">
    <property type="term" value="C:mitochondrion"/>
    <property type="evidence" value="ECO:0007669"/>
    <property type="project" value="GOC"/>
</dbReference>
<dbReference type="GO" id="GO:0003677">
    <property type="term" value="F:DNA binding"/>
    <property type="evidence" value="ECO:0007669"/>
    <property type="project" value="UniProtKB-UniRule"/>
</dbReference>
<dbReference type="GO" id="GO:0003899">
    <property type="term" value="F:DNA-directed RNA polymerase activity"/>
    <property type="evidence" value="ECO:0007669"/>
    <property type="project" value="UniProtKB-UniRule"/>
</dbReference>
<dbReference type="GO" id="GO:0032549">
    <property type="term" value="F:ribonucleoside binding"/>
    <property type="evidence" value="ECO:0007669"/>
    <property type="project" value="InterPro"/>
</dbReference>
<dbReference type="GO" id="GO:0006351">
    <property type="term" value="P:DNA-templated transcription"/>
    <property type="evidence" value="ECO:0007669"/>
    <property type="project" value="UniProtKB-UniRule"/>
</dbReference>
<dbReference type="CDD" id="cd00653">
    <property type="entry name" value="RNA_pol_B_RPB2"/>
    <property type="match status" value="1"/>
</dbReference>
<dbReference type="Gene3D" id="2.40.50.100">
    <property type="match status" value="1"/>
</dbReference>
<dbReference type="Gene3D" id="2.40.50.150">
    <property type="match status" value="1"/>
</dbReference>
<dbReference type="Gene3D" id="3.90.1100.10">
    <property type="match status" value="1"/>
</dbReference>
<dbReference type="Gene3D" id="2.30.150.10">
    <property type="entry name" value="DNA-directed RNA polymerase, beta subunit, external 1 domain"/>
    <property type="match status" value="1"/>
</dbReference>
<dbReference type="Gene3D" id="2.40.270.10">
    <property type="entry name" value="DNA-directed RNA polymerase, subunit 2, domain 6"/>
    <property type="match status" value="1"/>
</dbReference>
<dbReference type="Gene3D" id="3.90.1800.10">
    <property type="entry name" value="RNA polymerase alpha subunit dimerisation domain"/>
    <property type="match status" value="1"/>
</dbReference>
<dbReference type="Gene3D" id="3.90.1110.10">
    <property type="entry name" value="RNA polymerase Rpb2, domain 2"/>
    <property type="match status" value="1"/>
</dbReference>
<dbReference type="HAMAP" id="MF_01321">
    <property type="entry name" value="RNApol_bact_RpoB"/>
    <property type="match status" value="1"/>
</dbReference>
<dbReference type="InterPro" id="IPR042107">
    <property type="entry name" value="DNA-dir_RNA_pol_bsu_ext_1_sf"/>
</dbReference>
<dbReference type="InterPro" id="IPR019462">
    <property type="entry name" value="DNA-dir_RNA_pol_bsu_external_1"/>
</dbReference>
<dbReference type="InterPro" id="IPR015712">
    <property type="entry name" value="DNA-dir_RNA_pol_su2"/>
</dbReference>
<dbReference type="InterPro" id="IPR007120">
    <property type="entry name" value="DNA-dir_RNAP_su2_dom"/>
</dbReference>
<dbReference type="InterPro" id="IPR037033">
    <property type="entry name" value="DNA-dir_RNAP_su2_hyb_sf"/>
</dbReference>
<dbReference type="InterPro" id="IPR010243">
    <property type="entry name" value="RNA_pol_bsu_bac"/>
</dbReference>
<dbReference type="InterPro" id="IPR007121">
    <property type="entry name" value="RNA_pol_bsu_CS"/>
</dbReference>
<dbReference type="InterPro" id="IPR007644">
    <property type="entry name" value="RNA_pol_bsu_protrusion"/>
</dbReference>
<dbReference type="InterPro" id="IPR007642">
    <property type="entry name" value="RNA_pol_Rpb2_2"/>
</dbReference>
<dbReference type="InterPro" id="IPR037034">
    <property type="entry name" value="RNA_pol_Rpb2_2_sf"/>
</dbReference>
<dbReference type="InterPro" id="IPR007645">
    <property type="entry name" value="RNA_pol_Rpb2_3"/>
</dbReference>
<dbReference type="InterPro" id="IPR007641">
    <property type="entry name" value="RNA_pol_Rpb2_7"/>
</dbReference>
<dbReference type="InterPro" id="IPR014724">
    <property type="entry name" value="RNA_pol_RPB2_OB-fold"/>
</dbReference>
<dbReference type="NCBIfam" id="NF001616">
    <property type="entry name" value="PRK00405.1"/>
    <property type="match status" value="1"/>
</dbReference>
<dbReference type="NCBIfam" id="TIGR02013">
    <property type="entry name" value="rpoB"/>
    <property type="match status" value="1"/>
</dbReference>
<dbReference type="PANTHER" id="PTHR20856">
    <property type="entry name" value="DNA-DIRECTED RNA POLYMERASE I SUBUNIT 2"/>
    <property type="match status" value="1"/>
</dbReference>
<dbReference type="Pfam" id="PF04563">
    <property type="entry name" value="RNA_pol_Rpb2_1"/>
    <property type="match status" value="1"/>
</dbReference>
<dbReference type="Pfam" id="PF04561">
    <property type="entry name" value="RNA_pol_Rpb2_2"/>
    <property type="match status" value="1"/>
</dbReference>
<dbReference type="Pfam" id="PF04565">
    <property type="entry name" value="RNA_pol_Rpb2_3"/>
    <property type="match status" value="1"/>
</dbReference>
<dbReference type="Pfam" id="PF10385">
    <property type="entry name" value="RNA_pol_Rpb2_45"/>
    <property type="match status" value="1"/>
</dbReference>
<dbReference type="Pfam" id="PF00562">
    <property type="entry name" value="RNA_pol_Rpb2_6"/>
    <property type="match status" value="1"/>
</dbReference>
<dbReference type="Pfam" id="PF04560">
    <property type="entry name" value="RNA_pol_Rpb2_7"/>
    <property type="match status" value="1"/>
</dbReference>
<dbReference type="SUPFAM" id="SSF64484">
    <property type="entry name" value="beta and beta-prime subunits of DNA dependent RNA-polymerase"/>
    <property type="match status" value="1"/>
</dbReference>
<dbReference type="PROSITE" id="PS01166">
    <property type="entry name" value="RNA_POL_BETA"/>
    <property type="match status" value="1"/>
</dbReference>